<feature type="chain" id="PRO_1000186129" description="Regulatory ATPase RavA">
    <location>
        <begin position="1"/>
        <end position="498"/>
    </location>
</feature>
<feature type="binding site" evidence="1">
    <location>
        <position position="23"/>
    </location>
    <ligand>
        <name>ADP</name>
        <dbReference type="ChEBI" id="CHEBI:456216"/>
    </ligand>
</feature>
<feature type="binding site" evidence="1">
    <location>
        <position position="49"/>
    </location>
    <ligand>
        <name>ADP</name>
        <dbReference type="ChEBI" id="CHEBI:456216"/>
    </ligand>
</feature>
<feature type="binding site" evidence="1">
    <location>
        <position position="50"/>
    </location>
    <ligand>
        <name>ADP</name>
        <dbReference type="ChEBI" id="CHEBI:456216"/>
    </ligand>
</feature>
<feature type="binding site" evidence="1">
    <location>
        <position position="51"/>
    </location>
    <ligand>
        <name>ADP</name>
        <dbReference type="ChEBI" id="CHEBI:456216"/>
    </ligand>
</feature>
<feature type="binding site" evidence="1">
    <location>
        <position position="52"/>
    </location>
    <ligand>
        <name>ADP</name>
        <dbReference type="ChEBI" id="CHEBI:456216"/>
    </ligand>
</feature>
<feature type="binding site" evidence="1">
    <location>
        <position position="53"/>
    </location>
    <ligand>
        <name>ADP</name>
        <dbReference type="ChEBI" id="CHEBI:456216"/>
    </ligand>
</feature>
<feature type="binding site" evidence="1">
    <location>
        <position position="54"/>
    </location>
    <ligand>
        <name>ADP</name>
        <dbReference type="ChEBI" id="CHEBI:456216"/>
    </ligand>
</feature>
<feature type="binding site" evidence="1">
    <location>
        <position position="196"/>
    </location>
    <ligand>
        <name>ADP</name>
        <dbReference type="ChEBI" id="CHEBI:456216"/>
    </ligand>
</feature>
<reference key="1">
    <citation type="journal article" date="2008" name="J. Bacteriol.">
        <title>Insights into the environmental resistance gene pool from the genome sequence of the multidrug-resistant environmental isolate Escherichia coli SMS-3-5.</title>
        <authorList>
            <person name="Fricke W.F."/>
            <person name="Wright M.S."/>
            <person name="Lindell A.H."/>
            <person name="Harkins D.M."/>
            <person name="Baker-Austin C."/>
            <person name="Ravel J."/>
            <person name="Stepanauskas R."/>
        </authorList>
    </citation>
    <scope>NUCLEOTIDE SEQUENCE [LARGE SCALE GENOMIC DNA]</scope>
    <source>
        <strain>SMS-3-5 / SECEC</strain>
    </source>
</reference>
<evidence type="ECO:0000255" key="1">
    <source>
        <dbReference type="HAMAP-Rule" id="MF_01625"/>
    </source>
</evidence>
<name>RAVA_ECOSM</name>
<keyword id="KW-0067">ATP-binding</keyword>
<keyword id="KW-0143">Chaperone</keyword>
<keyword id="KW-0963">Cytoplasm</keyword>
<keyword id="KW-0378">Hydrolase</keyword>
<keyword id="KW-0547">Nucleotide-binding</keyword>
<organism>
    <name type="scientific">Escherichia coli (strain SMS-3-5 / SECEC)</name>
    <dbReference type="NCBI Taxonomy" id="439855"/>
    <lineage>
        <taxon>Bacteria</taxon>
        <taxon>Pseudomonadati</taxon>
        <taxon>Pseudomonadota</taxon>
        <taxon>Gammaproteobacteria</taxon>
        <taxon>Enterobacterales</taxon>
        <taxon>Enterobacteriaceae</taxon>
        <taxon>Escherichia</taxon>
    </lineage>
</organism>
<accession>B1LL73</accession>
<proteinExistence type="inferred from homology"/>
<dbReference type="EC" id="3.6.1.-" evidence="1"/>
<dbReference type="EMBL" id="CP000970">
    <property type="protein sequence ID" value="ACB15582.1"/>
    <property type="molecule type" value="Genomic_DNA"/>
</dbReference>
<dbReference type="RefSeq" id="WP_012311586.1">
    <property type="nucleotide sequence ID" value="NC_010498.1"/>
</dbReference>
<dbReference type="SMR" id="B1LL73"/>
<dbReference type="KEGG" id="ecm:EcSMS35_4114"/>
<dbReference type="HOGENOM" id="CLU_018678_1_0_6"/>
<dbReference type="Proteomes" id="UP000007011">
    <property type="component" value="Chromosome"/>
</dbReference>
<dbReference type="GO" id="GO:0005737">
    <property type="term" value="C:cytoplasm"/>
    <property type="evidence" value="ECO:0007669"/>
    <property type="project" value="UniProtKB-SubCell"/>
</dbReference>
<dbReference type="GO" id="GO:0005524">
    <property type="term" value="F:ATP binding"/>
    <property type="evidence" value="ECO:0007669"/>
    <property type="project" value="UniProtKB-KW"/>
</dbReference>
<dbReference type="GO" id="GO:0016887">
    <property type="term" value="F:ATP hydrolysis activity"/>
    <property type="evidence" value="ECO:0007669"/>
    <property type="project" value="UniProtKB-UniRule"/>
</dbReference>
<dbReference type="CDD" id="cd00009">
    <property type="entry name" value="AAA"/>
    <property type="match status" value="1"/>
</dbReference>
<dbReference type="FunFam" id="3.40.50.300:FF:000410">
    <property type="entry name" value="ATPase RavA"/>
    <property type="match status" value="1"/>
</dbReference>
<dbReference type="Gene3D" id="1.20.58.1510">
    <property type="match status" value="1"/>
</dbReference>
<dbReference type="Gene3D" id="2.40.128.430">
    <property type="match status" value="1"/>
</dbReference>
<dbReference type="Gene3D" id="3.40.50.300">
    <property type="entry name" value="P-loop containing nucleotide triphosphate hydrolases"/>
    <property type="match status" value="1"/>
</dbReference>
<dbReference type="HAMAP" id="MF_01625">
    <property type="entry name" value="ATPase_RavA"/>
    <property type="match status" value="1"/>
</dbReference>
<dbReference type="InterPro" id="IPR003593">
    <property type="entry name" value="AAA+_ATPase"/>
</dbReference>
<dbReference type="InterPro" id="IPR023671">
    <property type="entry name" value="ATPase_RavA"/>
</dbReference>
<dbReference type="InterPro" id="IPR022547">
    <property type="entry name" value="ATPase_RavA_C"/>
</dbReference>
<dbReference type="InterPro" id="IPR045427">
    <property type="entry name" value="MoxR"/>
</dbReference>
<dbReference type="InterPro" id="IPR027417">
    <property type="entry name" value="P-loop_NTPase"/>
</dbReference>
<dbReference type="InterPro" id="IPR041538">
    <property type="entry name" value="RavA-like_AAA_lid"/>
</dbReference>
<dbReference type="InterPro" id="IPR050513">
    <property type="entry name" value="RavA_ATPases"/>
</dbReference>
<dbReference type="InterPro" id="IPR046898">
    <property type="entry name" value="RavA_LARA_dom"/>
</dbReference>
<dbReference type="InterPro" id="IPR046932">
    <property type="entry name" value="RavA_LARA_sf"/>
</dbReference>
<dbReference type="NCBIfam" id="NF010054">
    <property type="entry name" value="PRK13531.1"/>
    <property type="match status" value="1"/>
</dbReference>
<dbReference type="PANTHER" id="PTHR32204">
    <property type="entry name" value="ATPASE RAVA"/>
    <property type="match status" value="1"/>
</dbReference>
<dbReference type="PANTHER" id="PTHR32204:SF0">
    <property type="entry name" value="ATPASE RAVA"/>
    <property type="match status" value="1"/>
</dbReference>
<dbReference type="Pfam" id="PF17868">
    <property type="entry name" value="AAA_lid_8"/>
    <property type="match status" value="1"/>
</dbReference>
<dbReference type="Pfam" id="PF12592">
    <property type="entry name" value="ATPase_RavA_C"/>
    <property type="match status" value="1"/>
</dbReference>
<dbReference type="Pfam" id="PF20030">
    <property type="entry name" value="bpMoxR"/>
    <property type="match status" value="1"/>
</dbReference>
<dbReference type="Pfam" id="PF20265">
    <property type="entry name" value="LARA_dom"/>
    <property type="match status" value="1"/>
</dbReference>
<dbReference type="SMART" id="SM00382">
    <property type="entry name" value="AAA"/>
    <property type="match status" value="1"/>
</dbReference>
<dbReference type="SUPFAM" id="SSF52540">
    <property type="entry name" value="P-loop containing nucleoside triphosphate hydrolases"/>
    <property type="match status" value="1"/>
</dbReference>
<gene>
    <name evidence="1" type="primary">ravA</name>
    <name type="ordered locus">EcSMS35_4114</name>
</gene>
<protein>
    <recommendedName>
        <fullName evidence="1">Regulatory ATPase RavA</fullName>
        <ecNumber evidence="1">3.6.1.-</ecNumber>
    </recommendedName>
    <alternativeName>
        <fullName evidence="1">Regulatory ATPase variant A</fullName>
    </alternativeName>
</protein>
<sequence length="498" mass="56449">MAHPHLLAERISRLSSSLEKGLYERSHAIRLCLLAALSGESVFLLGPPGIAKSLIARRLKFAFQNARAFEYLMTRFSTPEEVFGPLSIQALKDEGRYERLTSGYLPEAEIVFLDEIWKAGPAILNTLLTAINERQFRNGAHIEKIPMRLLVAASNELPEADSSLEALYDRMLIRLWLDKVQDKANFRSMLTSQQDENDNPVPTSLQVTDEEYERWQKEIGEITLPDHVFELIFMLRQQLDKLPDAPYVSDRRWKKAIRLLQASAFFSGRSAVAPVDLILLKDCLWYDAQSLNLIQQQIDVLMTGHAWQQQGMLTRLGAIVQRHLQLQQQQSDKTALTVIRLGGIFSRRQQYQLPVNVTASTLTLLLQKPLKLHDMEVVHITFERSALEQWLSKGGEIRGKLNGIGFAQKLNLEVDSTQHLVVRDVSLQGSTLALPGSSAEGLPGEIKQQLEELESDWRKQHALFSEQQKCLFIPGDWLGRIEASLQDVGAQIRQAQQC</sequence>
<comment type="function">
    <text evidence="1">Component of the RavA-ViaA chaperone complex, which may act on the membrane to optimize the function of some of the respiratory chains. RavA functions as an ATPase.</text>
</comment>
<comment type="catalytic activity">
    <reaction evidence="1">
        <text>ATP + H2O = ADP + phosphate + H(+)</text>
        <dbReference type="Rhea" id="RHEA:13065"/>
        <dbReference type="ChEBI" id="CHEBI:15377"/>
        <dbReference type="ChEBI" id="CHEBI:15378"/>
        <dbReference type="ChEBI" id="CHEBI:30616"/>
        <dbReference type="ChEBI" id="CHEBI:43474"/>
        <dbReference type="ChEBI" id="CHEBI:456216"/>
    </reaction>
</comment>
<comment type="activity regulation">
    <text evidence="1">ATPase activity is stimulated by ViaA.</text>
</comment>
<comment type="subunit">
    <text evidence="1">Homohexamer. Interacts with ViaA.</text>
</comment>
<comment type="subcellular location">
    <subcellularLocation>
        <location evidence="1">Cytoplasm</location>
    </subcellularLocation>
</comment>
<comment type="similarity">
    <text evidence="1">Belongs to the RavA family.</text>
</comment>